<organism>
    <name type="scientific">Mus musculus</name>
    <name type="common">Mouse</name>
    <dbReference type="NCBI Taxonomy" id="10090"/>
    <lineage>
        <taxon>Eukaryota</taxon>
        <taxon>Metazoa</taxon>
        <taxon>Chordata</taxon>
        <taxon>Craniata</taxon>
        <taxon>Vertebrata</taxon>
        <taxon>Euteleostomi</taxon>
        <taxon>Mammalia</taxon>
        <taxon>Eutheria</taxon>
        <taxon>Euarchontoglires</taxon>
        <taxon>Glires</taxon>
        <taxon>Rodentia</taxon>
        <taxon>Myomorpha</taxon>
        <taxon>Muroidea</taxon>
        <taxon>Muridae</taxon>
        <taxon>Murinae</taxon>
        <taxon>Mus</taxon>
        <taxon>Mus</taxon>
    </lineage>
</organism>
<accession>Q8C180</accession>
<gene>
    <name type="primary">Frs2</name>
    <name type="synonym">Frs2a</name>
</gene>
<evidence type="ECO:0000250" key="1"/>
<evidence type="ECO:0000250" key="2">
    <source>
        <dbReference type="UniProtKB" id="Q8WU20"/>
    </source>
</evidence>
<evidence type="ECO:0000255" key="3"/>
<evidence type="ECO:0000255" key="4">
    <source>
        <dbReference type="PROSITE-ProRule" id="PRU00389"/>
    </source>
</evidence>
<evidence type="ECO:0000256" key="5">
    <source>
        <dbReference type="SAM" id="MobiDB-lite"/>
    </source>
</evidence>
<evidence type="ECO:0000269" key="6">
    <source>
    </source>
</evidence>
<evidence type="ECO:0000269" key="7">
    <source>
    </source>
</evidence>
<evidence type="ECO:0000269" key="8">
    <source>
    </source>
</evidence>
<evidence type="ECO:0000269" key="9">
    <source>
    </source>
</evidence>
<evidence type="ECO:0000269" key="10">
    <source>
    </source>
</evidence>
<evidence type="ECO:0000269" key="11">
    <source>
    </source>
</evidence>
<evidence type="ECO:0000269" key="12">
    <source>
    </source>
</evidence>
<evidence type="ECO:0000269" key="13">
    <source>
    </source>
</evidence>
<evidence type="ECO:0000269" key="14">
    <source>
    </source>
</evidence>
<evidence type="ECO:0007744" key="15">
    <source>
    </source>
</evidence>
<evidence type="ECO:0007744" key="16">
    <source>
    </source>
</evidence>
<proteinExistence type="evidence at protein level"/>
<keyword id="KW-0903">Direct protein sequencing</keyword>
<keyword id="KW-0449">Lipoprotein</keyword>
<keyword id="KW-0472">Membrane</keyword>
<keyword id="KW-0519">Myristate</keyword>
<keyword id="KW-0597">Phosphoprotein</keyword>
<keyword id="KW-1185">Reference proteome</keyword>
<keyword id="KW-0832">Ubl conjugation</keyword>
<protein>
    <recommendedName>
        <fullName>Fibroblast growth factor receptor substrate 2</fullName>
        <shortName>FGFR substrate 2</shortName>
    </recommendedName>
    <alternativeName>
        <fullName>FGFR-signaling adaptor SNT</fullName>
    </alternativeName>
    <alternativeName>
        <fullName>FRS2-alpha</fullName>
    </alternativeName>
    <alternativeName>
        <fullName>Suc1-associated neurotrophic factor target 1</fullName>
        <shortName>SNT-1</shortName>
    </alternativeName>
</protein>
<feature type="initiator methionine" description="Removed" evidence="3">
    <location>
        <position position="1"/>
    </location>
</feature>
<feature type="chain" id="PRO_0000087345" description="Fibroblast growth factor receptor substrate 2">
    <location>
        <begin position="2"/>
        <end position="508"/>
    </location>
</feature>
<feature type="domain" description="IRS-type PTB" evidence="4">
    <location>
        <begin position="13"/>
        <end position="115"/>
    </location>
</feature>
<feature type="region of interest" description="Disordered" evidence="5">
    <location>
        <begin position="116"/>
        <end position="180"/>
    </location>
</feature>
<feature type="region of interest" description="Disordered" evidence="5">
    <location>
        <begin position="201"/>
        <end position="243"/>
    </location>
</feature>
<feature type="region of interest" description="Disordered" evidence="5">
    <location>
        <begin position="268"/>
        <end position="298"/>
    </location>
</feature>
<feature type="region of interest" description="Disordered" evidence="5">
    <location>
        <begin position="315"/>
        <end position="345"/>
    </location>
</feature>
<feature type="region of interest" description="Disordered" evidence="5">
    <location>
        <begin position="441"/>
        <end position="467"/>
    </location>
</feature>
<feature type="region of interest" description="Disordered" evidence="5">
    <location>
        <begin position="483"/>
        <end position="508"/>
    </location>
</feature>
<feature type="compositionally biased region" description="Basic and acidic residues" evidence="5">
    <location>
        <begin position="117"/>
        <end position="131"/>
    </location>
</feature>
<feature type="compositionally biased region" description="Basic and acidic residues" evidence="5">
    <location>
        <begin position="227"/>
        <end position="240"/>
    </location>
</feature>
<feature type="compositionally biased region" description="Polar residues" evidence="5">
    <location>
        <begin position="325"/>
        <end position="341"/>
    </location>
</feature>
<feature type="modified residue" description="Phosphoserine" evidence="2">
    <location>
        <position position="177"/>
    </location>
</feature>
<feature type="modified residue" description="Phosphotyrosine; by FGFR1" evidence="7 13 14">
    <location>
        <position position="196"/>
    </location>
</feature>
<feature type="modified residue" description="Phosphoserine" evidence="16">
    <location>
        <position position="211"/>
    </location>
</feature>
<feature type="modified residue" description="Phosphoserine" evidence="2">
    <location>
        <position position="221"/>
    </location>
</feature>
<feature type="modified residue" description="Phosphotyrosine; by FGFR1" evidence="7 13 14">
    <location>
        <position position="306"/>
    </location>
</feature>
<feature type="modified residue" description="Phosphotyrosine; by FGFR1" evidence="7 13 14 15">
    <location>
        <position position="349"/>
    </location>
</feature>
<feature type="modified residue" description="Phosphoserine" evidence="2">
    <location>
        <position position="365"/>
    </location>
</feature>
<feature type="modified residue" description="Phosphotyrosine; by FGFR1" evidence="7 13 14">
    <location>
        <position position="392"/>
    </location>
</feature>
<feature type="modified residue" description="Phosphotyrosine; by FGFR1" evidence="7 14">
    <location>
        <position position="436"/>
    </location>
</feature>
<feature type="modified residue" description="Phosphotyrosine; by FGFR1" evidence="7">
    <location>
        <position position="471"/>
    </location>
</feature>
<feature type="lipid moiety-binding region" description="N-myristoyl glycine" evidence="13">
    <location>
        <position position="2"/>
    </location>
</feature>
<feature type="mutagenesis site" description="Abolishes myristoylation and membrane association." evidence="13">
    <original>G</original>
    <variation>A</variation>
    <location>
        <position position="2"/>
    </location>
</feature>
<feature type="mutagenesis site" description="Abolishes tyrosine phosphorylation and interactions with GRB2 and PTPN11; when associated with F-306; F-349; F-392 and F-436." evidence="13">
    <original>Y</original>
    <variation>F</variation>
    <location>
        <position position="196"/>
    </location>
</feature>
<feature type="mutagenesis site" description="Abolishes tyrosine phosphorylation and interactions with GRB2 and PTPN11; when associated with F-196; F-349; F-392 and F-436." evidence="13">
    <original>Y</original>
    <variation>F</variation>
    <location>
        <position position="306"/>
    </location>
</feature>
<feature type="mutagenesis site" description="Abolishes tyrosine phosphorylation and interactions with GRB2 and PTPN11; when associated with F-196; F-306; F-392 and F-436." evidence="13">
    <original>Y</original>
    <variation>F</variation>
    <location>
        <position position="349"/>
    </location>
</feature>
<feature type="mutagenesis site" description="Abolishes tyrosine phosphorylation and interactions with GRB2 and PTPN11; when associated with F-196; F-306; F-349 and F-436." evidence="13">
    <original>Y</original>
    <variation>F</variation>
    <location>
        <position position="392"/>
    </location>
</feature>
<feature type="mutagenesis site" description="Abolishes tyrosine phosphorylation and interactions with GRB2 and PTPN11; when associated with F-196; F-306; F-349 and F-392." evidence="14">
    <original>Y</original>
    <variation>F</variation>
    <location>
        <position position="436"/>
    </location>
</feature>
<comment type="function">
    <text evidence="7 8 11 13 14">Adapter protein that links activated FGR and NGF receptors to downstream signaling pathways. Plays an important role in the activation of MAP kinases and in the phosphorylation of PIK3R1, the regulatory subunit of phosphatidylinositol 3-kinase, in response to ligand-mediated activation of FGFR1. Modulates signaling via SHC1 by competing for a common binding site on NTRK1.</text>
</comment>
<comment type="subunit">
    <text evidence="1 6 7 8 9 10 11 12 13 14">Part of a complex containing FRS2, GRB2, GAB1, PIK3R1 and SOS1. Part of a complex containing GRB2 and CBL. Binds ALK, CKS2, FGFR1, RET, MAPK1/ERK2, MAPK3/ERK1 and SRC. The tyrosine-phosphorylated protein binds the SH2 domains of GRB2 and PTPN11. Interacts with NTRK1, NTRK2 and NTRK3 (phosphorylated upon ligand-binding) (By similarity). Identified in a complex containing FGFR4, NCAM1, CDH2, PLCG1, FRS2, SRC, SHC1, GAP43 and CTTN.</text>
</comment>
<comment type="interaction">
    <interactant intactId="EBI-6880000">
        <id>Q8C180</id>
    </interactant>
    <interactant intactId="EBI-1688">
        <id>Q60631</id>
        <label>Grb2</label>
    </interactant>
    <organismsDiffer>false</organismsDiffer>
    <experiments>5</experiments>
</comment>
<comment type="subcellular location">
    <subcellularLocation>
        <location evidence="12">Membrane</location>
        <topology evidence="12">Lipid-anchor</topology>
    </subcellularLocation>
</comment>
<comment type="tissue specificity">
    <text evidence="13">Ubiquitous. Expression is highest in brain, kidney, lung and testis.</text>
</comment>
<comment type="PTM">
    <text>Phosphorylated on tyrosine residues upon stimulation by FGF2 or NGFB. Phosphorylated by ULK2 (in vitro). Phosphorylated on tyrosine residues by activated ALK and FGFR1. Phosphorylated on tyrosine residues upon activation of FGFR2 and FGFR3. Phosphorylated on threonine residues by MAP kinases; this inhibits tyrosine phosphorylation, and thereby down-regulates FRS2-mediated activation of MAP kinases.</text>
</comment>
<comment type="PTM">
    <text evidence="10">Ubiquitinated when tyrosine phosphorylated and in a complex with GRB2. The unphosphorylated form is not subject to ubiquitination.</text>
</comment>
<reference key="1">
    <citation type="journal article" date="2005" name="Science">
        <title>The transcriptional landscape of the mammalian genome.</title>
        <authorList>
            <person name="Carninci P."/>
            <person name="Kasukawa T."/>
            <person name="Katayama S."/>
            <person name="Gough J."/>
            <person name="Frith M.C."/>
            <person name="Maeda N."/>
            <person name="Oyama R."/>
            <person name="Ravasi T."/>
            <person name="Lenhard B."/>
            <person name="Wells C."/>
            <person name="Kodzius R."/>
            <person name="Shimokawa K."/>
            <person name="Bajic V.B."/>
            <person name="Brenner S.E."/>
            <person name="Batalov S."/>
            <person name="Forrest A.R."/>
            <person name="Zavolan M."/>
            <person name="Davis M.J."/>
            <person name="Wilming L.G."/>
            <person name="Aidinis V."/>
            <person name="Allen J.E."/>
            <person name="Ambesi-Impiombato A."/>
            <person name="Apweiler R."/>
            <person name="Aturaliya R.N."/>
            <person name="Bailey T.L."/>
            <person name="Bansal M."/>
            <person name="Baxter L."/>
            <person name="Beisel K.W."/>
            <person name="Bersano T."/>
            <person name="Bono H."/>
            <person name="Chalk A.M."/>
            <person name="Chiu K.P."/>
            <person name="Choudhary V."/>
            <person name="Christoffels A."/>
            <person name="Clutterbuck D.R."/>
            <person name="Crowe M.L."/>
            <person name="Dalla E."/>
            <person name="Dalrymple B.P."/>
            <person name="de Bono B."/>
            <person name="Della Gatta G."/>
            <person name="di Bernardo D."/>
            <person name="Down T."/>
            <person name="Engstrom P."/>
            <person name="Fagiolini M."/>
            <person name="Faulkner G."/>
            <person name="Fletcher C.F."/>
            <person name="Fukushima T."/>
            <person name="Furuno M."/>
            <person name="Futaki S."/>
            <person name="Gariboldi M."/>
            <person name="Georgii-Hemming P."/>
            <person name="Gingeras T.R."/>
            <person name="Gojobori T."/>
            <person name="Green R.E."/>
            <person name="Gustincich S."/>
            <person name="Harbers M."/>
            <person name="Hayashi Y."/>
            <person name="Hensch T.K."/>
            <person name="Hirokawa N."/>
            <person name="Hill D."/>
            <person name="Huminiecki L."/>
            <person name="Iacono M."/>
            <person name="Ikeo K."/>
            <person name="Iwama A."/>
            <person name="Ishikawa T."/>
            <person name="Jakt M."/>
            <person name="Kanapin A."/>
            <person name="Katoh M."/>
            <person name="Kawasawa Y."/>
            <person name="Kelso J."/>
            <person name="Kitamura H."/>
            <person name="Kitano H."/>
            <person name="Kollias G."/>
            <person name="Krishnan S.P."/>
            <person name="Kruger A."/>
            <person name="Kummerfeld S.K."/>
            <person name="Kurochkin I.V."/>
            <person name="Lareau L.F."/>
            <person name="Lazarevic D."/>
            <person name="Lipovich L."/>
            <person name="Liu J."/>
            <person name="Liuni S."/>
            <person name="McWilliam S."/>
            <person name="Madan Babu M."/>
            <person name="Madera M."/>
            <person name="Marchionni L."/>
            <person name="Matsuda H."/>
            <person name="Matsuzawa S."/>
            <person name="Miki H."/>
            <person name="Mignone F."/>
            <person name="Miyake S."/>
            <person name="Morris K."/>
            <person name="Mottagui-Tabar S."/>
            <person name="Mulder N."/>
            <person name="Nakano N."/>
            <person name="Nakauchi H."/>
            <person name="Ng P."/>
            <person name="Nilsson R."/>
            <person name="Nishiguchi S."/>
            <person name="Nishikawa S."/>
            <person name="Nori F."/>
            <person name="Ohara O."/>
            <person name="Okazaki Y."/>
            <person name="Orlando V."/>
            <person name="Pang K.C."/>
            <person name="Pavan W.J."/>
            <person name="Pavesi G."/>
            <person name="Pesole G."/>
            <person name="Petrovsky N."/>
            <person name="Piazza S."/>
            <person name="Reed J."/>
            <person name="Reid J.F."/>
            <person name="Ring B.Z."/>
            <person name="Ringwald M."/>
            <person name="Rost B."/>
            <person name="Ruan Y."/>
            <person name="Salzberg S.L."/>
            <person name="Sandelin A."/>
            <person name="Schneider C."/>
            <person name="Schoenbach C."/>
            <person name="Sekiguchi K."/>
            <person name="Semple C.A."/>
            <person name="Seno S."/>
            <person name="Sessa L."/>
            <person name="Sheng Y."/>
            <person name="Shibata Y."/>
            <person name="Shimada H."/>
            <person name="Shimada K."/>
            <person name="Silva D."/>
            <person name="Sinclair B."/>
            <person name="Sperling S."/>
            <person name="Stupka E."/>
            <person name="Sugiura K."/>
            <person name="Sultana R."/>
            <person name="Takenaka Y."/>
            <person name="Taki K."/>
            <person name="Tammoja K."/>
            <person name="Tan S.L."/>
            <person name="Tang S."/>
            <person name="Taylor M.S."/>
            <person name="Tegner J."/>
            <person name="Teichmann S.A."/>
            <person name="Ueda H.R."/>
            <person name="van Nimwegen E."/>
            <person name="Verardo R."/>
            <person name="Wei C.L."/>
            <person name="Yagi K."/>
            <person name="Yamanishi H."/>
            <person name="Zabarovsky E."/>
            <person name="Zhu S."/>
            <person name="Zimmer A."/>
            <person name="Hide W."/>
            <person name="Bult C."/>
            <person name="Grimmond S.M."/>
            <person name="Teasdale R.D."/>
            <person name="Liu E.T."/>
            <person name="Brusic V."/>
            <person name="Quackenbush J."/>
            <person name="Wahlestedt C."/>
            <person name="Mattick J.S."/>
            <person name="Hume D.A."/>
            <person name="Kai C."/>
            <person name="Sasaki D."/>
            <person name="Tomaru Y."/>
            <person name="Fukuda S."/>
            <person name="Kanamori-Katayama M."/>
            <person name="Suzuki M."/>
            <person name="Aoki J."/>
            <person name="Arakawa T."/>
            <person name="Iida J."/>
            <person name="Imamura K."/>
            <person name="Itoh M."/>
            <person name="Kato T."/>
            <person name="Kawaji H."/>
            <person name="Kawagashira N."/>
            <person name="Kawashima T."/>
            <person name="Kojima M."/>
            <person name="Kondo S."/>
            <person name="Konno H."/>
            <person name="Nakano K."/>
            <person name="Ninomiya N."/>
            <person name="Nishio T."/>
            <person name="Okada M."/>
            <person name="Plessy C."/>
            <person name="Shibata K."/>
            <person name="Shiraki T."/>
            <person name="Suzuki S."/>
            <person name="Tagami M."/>
            <person name="Waki K."/>
            <person name="Watahiki A."/>
            <person name="Okamura-Oho Y."/>
            <person name="Suzuki H."/>
            <person name="Kawai J."/>
            <person name="Hayashizaki Y."/>
        </authorList>
    </citation>
    <scope>NUCLEOTIDE SEQUENCE [LARGE SCALE MRNA]</scope>
    <source>
        <strain>C57BL/6J</strain>
        <tissue>Skin</tissue>
    </source>
</reference>
<reference key="2">
    <citation type="journal article" date="2004" name="Genome Res.">
        <title>The status, quality, and expansion of the NIH full-length cDNA project: the Mammalian Gene Collection (MGC).</title>
        <authorList>
            <consortium name="The MGC Project Team"/>
        </authorList>
    </citation>
    <scope>NUCLEOTIDE SEQUENCE [LARGE SCALE MRNA]</scope>
    <source>
        <strain>C57BL/6J</strain>
        <tissue>Brain</tissue>
    </source>
</reference>
<reference key="3">
    <citation type="journal article" date="1997" name="Cell">
        <title>A lipid-anchored Grb2-binding protein that links FGF-receptor activation to the Ras/MAPK signaling pathway.</title>
        <authorList>
            <person name="Kouhara H."/>
            <person name="Hadari Y.R."/>
            <person name="Spivak-Kroizman T."/>
            <person name="Schilling J."/>
            <person name="Bar-Sagi D."/>
            <person name="Lax I."/>
            <person name="Schlessinger J."/>
        </authorList>
    </citation>
    <scope>PROTEIN SEQUENCE OF 251-260; 305-320; 344-361 AND 468-480</scope>
    <scope>FUNCTION</scope>
    <scope>INTERACTION WITH GRB2</scope>
    <scope>IDENTIFICATION IN A COMPLEX WITH GRB2 AND SOS1</scope>
    <scope>MYRISTOYLATION AT GLY-2</scope>
    <scope>MUTAGENESIS OF GLY-2; TYR-196; TYR-306; TYR-349 AND TYR-392</scope>
    <scope>PHOSPHORYLATION AT TYR-196; TYR-306; TYR-349 AND TYR-392</scope>
    <scope>TISSUE SPECIFICITY</scope>
</reference>
<reference key="4">
    <citation type="journal article" date="1996" name="Biochem. Biophys. Res. Commun.">
        <title>Suc1-associated neurotrophic factor target (SNT) protein is a major FGF-stimulated tyrosine phosphorylated 90-kDa protein which binds to the SH2 domain of GRB2.</title>
        <authorList>
            <person name="Ong S.-H."/>
            <person name="Goh K.C."/>
            <person name="Lim Y.P."/>
            <person name="Low B.C."/>
            <person name="Klint P."/>
            <person name="Claesson-Welsh L."/>
            <person name="Cao X."/>
            <person name="Tan Y.H."/>
            <person name="Guy G.R."/>
        </authorList>
    </citation>
    <scope>INTERACTION WITH SUC1 AND GRB2</scope>
    <scope>PHOSPHORYLATION AT TYROSINE RESIDUES</scope>
    <scope>SUBCELLULAR LOCATION</scope>
</reference>
<reference key="5">
    <citation type="journal article" date="1998" name="Mol. Cell. Biol.">
        <title>Binding of Shp2 tyrosine phosphatase to FRS2 is essential for fibroblast growth factor-induced PC12 cell differentiation.</title>
        <authorList>
            <person name="Hadari Y.R."/>
            <person name="Kouhara H."/>
            <person name="Lax I."/>
            <person name="Schlessinger J."/>
        </authorList>
    </citation>
    <scope>INTERACTION WITH PTPN11</scope>
    <scope>FUNCTION</scope>
    <scope>PHOSPHORYLATION AT TYR-196; TYR-306; TYR-349; TYR-392 AND TYR-436</scope>
    <scope>MUTAGENESIS OF TYR-436</scope>
</reference>
<reference key="6">
    <citation type="journal article" date="2000" name="J. Cell Biol.">
        <title>Signaling by fibroblast growth factors (FGF) and fibroblast growth factor receptor 2 (FGFR2)-activating mutations blocks mineralization and induces apoptosis in osteoblasts.</title>
        <authorList>
            <person name="Mansukhani A."/>
            <person name="Bellosta P."/>
            <person name="Sahni M."/>
            <person name="Basilico C."/>
        </authorList>
    </citation>
    <scope>PHOSPHORYLATION IN RESPONSE TO FRFR2 AND FGFR3 ACTIVATION</scope>
</reference>
<reference key="7">
    <citation type="journal article" date="2000" name="Mol. Cell. Biol.">
        <title>FRS2 proteins recruit intracellular signaling pathways by binding to diverse targets on fibroblast growth factor and nerve growth factor receptors.</title>
        <authorList>
            <person name="Ong S.-H."/>
            <person name="Guy G.R."/>
            <person name="Hadari Y.R."/>
            <person name="Laks S."/>
            <person name="Gotoh N."/>
            <person name="Schlessinger J."/>
            <person name="Lax I."/>
        </authorList>
    </citation>
    <scope>INTERACTION WITH FGFR1 AND NTRK1</scope>
</reference>
<reference key="8">
    <citation type="journal article" date="2001" name="Mol. Cell. Biol.">
        <title>Docking protein FRS2 links the protein tyrosine kinase RET and its oncogenic forms with the mitogen-activated protein kinase signaling cascade.</title>
        <authorList>
            <person name="Melillo R.M."/>
            <person name="Santoro M."/>
            <person name="Ong S.-H."/>
            <person name="Billaud M."/>
            <person name="Fusco A."/>
            <person name="Hadari Y.R."/>
            <person name="Schlessinger J."/>
            <person name="Lax I."/>
        </authorList>
    </citation>
    <scope>FUNCTION</scope>
    <scope>INTERACTION WITH RET</scope>
    <scope>PHOSPHORYLATION AT TYROSINE RESIDUES</scope>
</reference>
<reference key="9">
    <citation type="journal article" date="2001" name="Nat. Cell Biol.">
        <title>N-CAM modulates tumour-cell adhesion to matrix by inducing FGF-receptor signalling.</title>
        <authorList>
            <person name="Cavallaro U."/>
            <person name="Niedermeyer J."/>
            <person name="Fuxa M."/>
            <person name="Christofori G."/>
        </authorList>
    </citation>
    <scope>IDENTIFICATION IN A COMPLEX WITH NCAM1; CDH2; PLCG1; FRS2; SRC; SHC1; GAP43 AND CTTN</scope>
</reference>
<reference key="10">
    <citation type="journal article" date="2001" name="Proc. Natl. Acad. Sci. U.S.A.">
        <title>Stimulation of phosphatidylinositol 3-kinase by fibroblast growth factor receptors is mediated by coordinated recruitment of multiple docking proteins.</title>
        <authorList>
            <person name="Ong S.H."/>
            <person name="Hadari Y.R."/>
            <person name="Gotoh N."/>
            <person name="Guy G.R."/>
            <person name="Schlessinger J."/>
            <person name="Lax I."/>
        </authorList>
    </citation>
    <scope>FUNCTION</scope>
    <scope>INTERACTION WITH GRB2 AND GAB1</scope>
    <scope>PHOSPHORYLATION AT TYR-196; TYR-306; TYR-349; TYR-392; TYR-436 AND TYR-471</scope>
</reference>
<reference key="11">
    <citation type="journal article" date="2002" name="Mol. Biol. Cell">
        <title>The Shb adaptor protein binds to tyrosine 766 in the FGFR-1 and regulates the Ras/MEK/MAPK pathway via FRS2 phosphorylation in endothelial cells.</title>
        <authorList>
            <person name="Cross M.J."/>
            <person name="Lu L."/>
            <person name="Magnusson P."/>
            <person name="Nyqvist D."/>
            <person name="Holmqvist K."/>
            <person name="Welsh M."/>
            <person name="Claesson-Welsh L."/>
        </authorList>
    </citation>
    <scope>FUNCTION IN ACTIVATION OF SIGNALING VIA RAS AND MAP KINASES</scope>
    <scope>INTERACTION WITH PTPN11</scope>
    <scope>PHOSPHORYLATION</scope>
</reference>
<reference key="12">
    <citation type="journal article" date="2002" name="Proc. Natl. Acad. Sci. U.S.A.">
        <title>FRS2 alpha attenuates FGF receptor signaling by Grb2-mediated recruitment of the ubiquitin ligase Cbl.</title>
        <authorList>
            <person name="Wong A."/>
            <person name="Lamothe B."/>
            <person name="Lee A."/>
            <person name="Schlessinger J."/>
            <person name="Lax I."/>
        </authorList>
    </citation>
    <scope>IDENTIFICATION IN A COMPLEX WITH GRB2 AND CBL</scope>
    <scope>UBIQUITINATION</scope>
</reference>
<reference key="13">
    <citation type="journal article" date="2007" name="Cell. Signal.">
        <title>UNC-51-like kinase regulation of fibroblast growth factor receptor substrate 2/3.</title>
        <authorList>
            <person name="Avery A.W."/>
            <person name="Figueroa C."/>
            <person name="Vojtek A.B."/>
        </authorList>
    </citation>
    <scope>PHOSPHORYLATION BY ULK2</scope>
</reference>
<reference key="14">
    <citation type="journal article" date="2007" name="Proc. Natl. Acad. Sci. U.S.A.">
        <title>Large-scale phosphorylation analysis of mouse liver.</title>
        <authorList>
            <person name="Villen J."/>
            <person name="Beausoleil S.A."/>
            <person name="Gerber S.A."/>
            <person name="Gygi S.P."/>
        </authorList>
    </citation>
    <scope>IDENTIFICATION BY MASS SPECTROMETRY [LARGE SCALE ANALYSIS]</scope>
    <source>
        <tissue>Liver</tissue>
    </source>
</reference>
<reference key="15">
    <citation type="journal article" date="2008" name="Cancer Sci.">
        <title>Regulation of growth factor signaling by FRS2 family docking/scaffold adaptor proteins.</title>
        <authorList>
            <person name="Gotoh N."/>
        </authorList>
    </citation>
    <scope>REVIEW ON FUNCTION; SUBUNIT AND PHOSPHORYLATION</scope>
</reference>
<reference key="16">
    <citation type="journal article" date="2009" name="Immunity">
        <title>The phagosomal proteome in interferon-gamma-activated macrophages.</title>
        <authorList>
            <person name="Trost M."/>
            <person name="English L."/>
            <person name="Lemieux S."/>
            <person name="Courcelles M."/>
            <person name="Desjardins M."/>
            <person name="Thibault P."/>
        </authorList>
    </citation>
    <scope>PHOSPHORYLATION [LARGE SCALE ANALYSIS] AT SER-211</scope>
    <scope>IDENTIFICATION BY MASS SPECTROMETRY [LARGE SCALE ANALYSIS]</scope>
</reference>
<reference key="17">
    <citation type="journal article" date="2009" name="Mol. Cell. Proteomics">
        <title>Large scale localization of protein phosphorylation by use of electron capture dissociation mass spectrometry.</title>
        <authorList>
            <person name="Sweet S.M."/>
            <person name="Bailey C.M."/>
            <person name="Cunningham D.L."/>
            <person name="Heath J.K."/>
            <person name="Cooper H.J."/>
        </authorList>
    </citation>
    <scope>PHOSPHORYLATION [LARGE SCALE ANALYSIS] AT TYR-349</scope>
    <scope>IDENTIFICATION BY MASS SPECTROMETRY [LARGE SCALE ANALYSIS]</scope>
    <source>
        <tissue>Embryonic fibroblast</tissue>
    </source>
</reference>
<reference key="18">
    <citation type="journal article" date="2010" name="Cell">
        <title>A tissue-specific atlas of mouse protein phosphorylation and expression.</title>
        <authorList>
            <person name="Huttlin E.L."/>
            <person name="Jedrychowski M.P."/>
            <person name="Elias J.E."/>
            <person name="Goswami T."/>
            <person name="Rad R."/>
            <person name="Beausoleil S.A."/>
            <person name="Villen J."/>
            <person name="Haas W."/>
            <person name="Sowa M.E."/>
            <person name="Gygi S.P."/>
        </authorList>
    </citation>
    <scope>IDENTIFICATION BY MASS SPECTROMETRY [LARGE SCALE ANALYSIS]</scope>
    <source>
        <tissue>Heart</tissue>
        <tissue>Kidney</tissue>
        <tissue>Lung</tissue>
        <tissue>Spleen</tissue>
    </source>
</reference>
<reference key="19">
    <citation type="journal article" date="2010" name="Nat. Rev. Cancer">
        <title>Fibroblast growth factor signalling: from development to cancer.</title>
        <authorList>
            <person name="Turner N."/>
            <person name="Grose R."/>
        </authorList>
    </citation>
    <scope>REVIEW ON FUNCTION IN FGF SIGNALING</scope>
</reference>
<dbReference type="EMBL" id="AK028813">
    <property type="protein sequence ID" value="BAC26132.1"/>
    <property type="molecule type" value="mRNA"/>
</dbReference>
<dbReference type="EMBL" id="BC043109">
    <property type="protein sequence ID" value="AAH43109.1"/>
    <property type="molecule type" value="mRNA"/>
</dbReference>
<dbReference type="EMBL" id="BC055334">
    <property type="protein sequence ID" value="AAH55334.1"/>
    <property type="molecule type" value="mRNA"/>
</dbReference>
<dbReference type="CCDS" id="CCDS24190.1"/>
<dbReference type="RefSeq" id="NP_001395211.1">
    <property type="nucleotide sequence ID" value="NM_001408282.1"/>
</dbReference>
<dbReference type="RefSeq" id="NP_001395212.1">
    <property type="nucleotide sequence ID" value="NM_001408283.1"/>
</dbReference>
<dbReference type="RefSeq" id="NP_001395213.1">
    <property type="nucleotide sequence ID" value="NM_001408284.1"/>
</dbReference>
<dbReference type="RefSeq" id="NP_001395214.1">
    <property type="nucleotide sequence ID" value="NM_001408285.1"/>
</dbReference>
<dbReference type="RefSeq" id="NP_001395215.1">
    <property type="nucleotide sequence ID" value="NM_001408286.1"/>
</dbReference>
<dbReference type="RefSeq" id="NP_001395216.1">
    <property type="nucleotide sequence ID" value="NM_001408287.1"/>
</dbReference>
<dbReference type="RefSeq" id="NP_001395217.1">
    <property type="nucleotide sequence ID" value="NM_001408288.1"/>
</dbReference>
<dbReference type="RefSeq" id="NP_001395218.1">
    <property type="nucleotide sequence ID" value="NM_001408289.1"/>
</dbReference>
<dbReference type="RefSeq" id="NP_001395219.1">
    <property type="nucleotide sequence ID" value="NM_001408290.1"/>
</dbReference>
<dbReference type="RefSeq" id="NP_001395220.1">
    <property type="nucleotide sequence ID" value="NM_001408291.1"/>
</dbReference>
<dbReference type="RefSeq" id="NP_001395221.1">
    <property type="nucleotide sequence ID" value="NM_001408292.1"/>
</dbReference>
<dbReference type="RefSeq" id="NP_001395222.1">
    <property type="nucleotide sequence ID" value="NM_001408293.1"/>
</dbReference>
<dbReference type="RefSeq" id="NP_001395223.1">
    <property type="nucleotide sequence ID" value="NM_001408294.1"/>
</dbReference>
<dbReference type="RefSeq" id="NP_001395224.1">
    <property type="nucleotide sequence ID" value="NM_001408295.1"/>
</dbReference>
<dbReference type="RefSeq" id="NP_001395225.1">
    <property type="nucleotide sequence ID" value="NM_001408296.1"/>
</dbReference>
<dbReference type="RefSeq" id="NP_001395226.1">
    <property type="nucleotide sequence ID" value="NM_001408297.1"/>
</dbReference>
<dbReference type="RefSeq" id="NP_808466.1">
    <property type="nucleotide sequence ID" value="NM_177798.4"/>
</dbReference>
<dbReference type="BMRB" id="Q8C180"/>
<dbReference type="SMR" id="Q8C180"/>
<dbReference type="BioGRID" id="236497">
    <property type="interactions" value="7"/>
</dbReference>
<dbReference type="CORUM" id="Q8C180"/>
<dbReference type="FunCoup" id="Q8C180">
    <property type="interactions" value="2667"/>
</dbReference>
<dbReference type="IntAct" id="Q8C180">
    <property type="interactions" value="2"/>
</dbReference>
<dbReference type="MINT" id="Q8C180"/>
<dbReference type="STRING" id="10090.ENSMUSP00000020381"/>
<dbReference type="GlyGen" id="Q8C180">
    <property type="glycosylation" value="2 sites, 1 O-linked glycan (1 site)"/>
</dbReference>
<dbReference type="iPTMnet" id="Q8C180"/>
<dbReference type="PhosphoSitePlus" id="Q8C180"/>
<dbReference type="SwissPalm" id="Q8C180"/>
<dbReference type="jPOST" id="Q8C180"/>
<dbReference type="PaxDb" id="10090-ENSMUSP00000020381"/>
<dbReference type="PeptideAtlas" id="Q8C180"/>
<dbReference type="ProteomicsDB" id="267526"/>
<dbReference type="Pumba" id="Q8C180"/>
<dbReference type="Antibodypedia" id="4156">
    <property type="antibodies" value="510 antibodies from 39 providers"/>
</dbReference>
<dbReference type="DNASU" id="327826"/>
<dbReference type="Ensembl" id="ENSMUST00000020381.5">
    <property type="protein sequence ID" value="ENSMUSP00000020381.4"/>
    <property type="gene ID" value="ENSMUSG00000020170.5"/>
</dbReference>
<dbReference type="GeneID" id="327826"/>
<dbReference type="KEGG" id="mmu:327826"/>
<dbReference type="UCSC" id="uc007hct.1">
    <property type="organism name" value="mouse"/>
</dbReference>
<dbReference type="AGR" id="MGI:1100860"/>
<dbReference type="CTD" id="10818"/>
<dbReference type="MGI" id="MGI:1100860">
    <property type="gene designation" value="Frs2"/>
</dbReference>
<dbReference type="VEuPathDB" id="HostDB:ENSMUSG00000020170"/>
<dbReference type="eggNOG" id="KOG4047">
    <property type="taxonomic scope" value="Eukaryota"/>
</dbReference>
<dbReference type="GeneTree" id="ENSGT00940000157033"/>
<dbReference type="HOGENOM" id="CLU_022374_0_0_1"/>
<dbReference type="InParanoid" id="Q8C180"/>
<dbReference type="OMA" id="AHKIDYS"/>
<dbReference type="OrthoDB" id="8817077at2759"/>
<dbReference type="PhylomeDB" id="Q8C180"/>
<dbReference type="TreeFam" id="TF324994"/>
<dbReference type="Reactome" id="R-MMU-109704">
    <property type="pathway name" value="PI3K Cascade"/>
</dbReference>
<dbReference type="Reactome" id="R-MMU-1257604">
    <property type="pathway name" value="PIP3 activates AKT signaling"/>
</dbReference>
<dbReference type="Reactome" id="R-MMU-170968">
    <property type="pathway name" value="Frs2-mediated activation"/>
</dbReference>
<dbReference type="Reactome" id="R-MMU-5654689">
    <property type="pathway name" value="PI-3K cascade:FGFR1"/>
</dbReference>
<dbReference type="Reactome" id="R-MMU-5654693">
    <property type="pathway name" value="FRS-mediated FGFR1 signaling"/>
</dbReference>
<dbReference type="Reactome" id="R-MMU-5654695">
    <property type="pathway name" value="PI-3K cascade:FGFR2"/>
</dbReference>
<dbReference type="Reactome" id="R-MMU-5654700">
    <property type="pathway name" value="FRS-mediated FGFR2 signaling"/>
</dbReference>
<dbReference type="Reactome" id="R-MMU-5654706">
    <property type="pathway name" value="FRS-mediated FGFR3 signaling"/>
</dbReference>
<dbReference type="Reactome" id="R-MMU-5654710">
    <property type="pathway name" value="PI-3K cascade:FGFR3"/>
</dbReference>
<dbReference type="Reactome" id="R-MMU-5654712">
    <property type="pathway name" value="FRS-mediated FGFR4 signaling"/>
</dbReference>
<dbReference type="Reactome" id="R-MMU-5654720">
    <property type="pathway name" value="PI-3K cascade:FGFR4"/>
</dbReference>
<dbReference type="Reactome" id="R-MMU-5654726">
    <property type="pathway name" value="Negative regulation of FGFR1 signaling"/>
</dbReference>
<dbReference type="Reactome" id="R-MMU-5654727">
    <property type="pathway name" value="Negative regulation of FGFR2 signaling"/>
</dbReference>
<dbReference type="Reactome" id="R-MMU-5654732">
    <property type="pathway name" value="Negative regulation of FGFR3 signaling"/>
</dbReference>
<dbReference type="Reactome" id="R-MMU-5654733">
    <property type="pathway name" value="Negative regulation of FGFR4 signaling"/>
</dbReference>
<dbReference type="Reactome" id="R-MMU-5673001">
    <property type="pathway name" value="RAF/MAP kinase cascade"/>
</dbReference>
<dbReference type="Reactome" id="R-MMU-6811558">
    <property type="pathway name" value="PI5P, PP2A and IER3 Regulate PI3K/AKT Signaling"/>
</dbReference>
<dbReference type="Reactome" id="R-MMU-8853659">
    <property type="pathway name" value="RET signaling"/>
</dbReference>
<dbReference type="Reactome" id="R-MMU-9028731">
    <property type="pathway name" value="Activated NTRK2 signals through FRS2 and FRS3"/>
</dbReference>
<dbReference type="Reactome" id="R-MMU-9696270">
    <property type="pathway name" value="RND2 GTPase cycle"/>
</dbReference>
<dbReference type="Reactome" id="R-MMU-9696273">
    <property type="pathway name" value="RND1 GTPase cycle"/>
</dbReference>
<dbReference type="BioGRID-ORCS" id="327826">
    <property type="hits" value="4 hits in 77 CRISPR screens"/>
</dbReference>
<dbReference type="CD-CODE" id="CE726F99">
    <property type="entry name" value="Postsynaptic density"/>
</dbReference>
<dbReference type="ChiTaRS" id="Frs2">
    <property type="organism name" value="mouse"/>
</dbReference>
<dbReference type="PRO" id="PR:Q8C180"/>
<dbReference type="Proteomes" id="UP000000589">
    <property type="component" value="Chromosome 10"/>
</dbReference>
<dbReference type="RNAct" id="Q8C180">
    <property type="molecule type" value="protein"/>
</dbReference>
<dbReference type="Bgee" id="ENSMUSG00000020170">
    <property type="expression patterns" value="Expressed in manus and 243 other cell types or tissues"/>
</dbReference>
<dbReference type="GO" id="GO:0005912">
    <property type="term" value="C:adherens junction"/>
    <property type="evidence" value="ECO:0007669"/>
    <property type="project" value="Ensembl"/>
</dbReference>
<dbReference type="GO" id="GO:0005911">
    <property type="term" value="C:cell-cell junction"/>
    <property type="evidence" value="ECO:0000314"/>
    <property type="project" value="MGI"/>
</dbReference>
<dbReference type="GO" id="GO:0005737">
    <property type="term" value="C:cytoplasm"/>
    <property type="evidence" value="ECO:0000314"/>
    <property type="project" value="MGI"/>
</dbReference>
<dbReference type="GO" id="GO:0005829">
    <property type="term" value="C:cytosol"/>
    <property type="evidence" value="ECO:0000304"/>
    <property type="project" value="Reactome"/>
</dbReference>
<dbReference type="GO" id="GO:0005886">
    <property type="term" value="C:plasma membrane"/>
    <property type="evidence" value="ECO:0000314"/>
    <property type="project" value="MGI"/>
</dbReference>
<dbReference type="GO" id="GO:0005104">
    <property type="term" value="F:fibroblast growth factor receptor binding"/>
    <property type="evidence" value="ECO:0000266"/>
    <property type="project" value="MGI"/>
</dbReference>
<dbReference type="GO" id="GO:0005168">
    <property type="term" value="F:neurotrophin TRKA receptor binding"/>
    <property type="evidence" value="ECO:0007669"/>
    <property type="project" value="Ensembl"/>
</dbReference>
<dbReference type="GO" id="GO:0005068">
    <property type="term" value="F:transmembrane receptor protein tyrosine kinase adaptor activity"/>
    <property type="evidence" value="ECO:0000314"/>
    <property type="project" value="MGI"/>
</dbReference>
<dbReference type="GO" id="GO:0008595">
    <property type="term" value="P:anterior/posterior axis specification, embryo"/>
    <property type="evidence" value="ECO:0000315"/>
    <property type="project" value="MGI"/>
</dbReference>
<dbReference type="GO" id="GO:0007169">
    <property type="term" value="P:cell surface receptor protein tyrosine kinase signaling pathway"/>
    <property type="evidence" value="ECO:0000314"/>
    <property type="project" value="MGI"/>
</dbReference>
<dbReference type="GO" id="GO:0008543">
    <property type="term" value="P:fibroblast growth factor receptor signaling pathway"/>
    <property type="evidence" value="ECO:0000315"/>
    <property type="project" value="MGI"/>
</dbReference>
<dbReference type="GO" id="GO:0030900">
    <property type="term" value="P:forebrain development"/>
    <property type="evidence" value="ECO:0000315"/>
    <property type="project" value="MGI"/>
</dbReference>
<dbReference type="GO" id="GO:0001702">
    <property type="term" value="P:gastrulation with mouth forming second"/>
    <property type="evidence" value="ECO:0000315"/>
    <property type="project" value="MGI"/>
</dbReference>
<dbReference type="GO" id="GO:0002088">
    <property type="term" value="P:lens development in camera-type eye"/>
    <property type="evidence" value="ECO:0000315"/>
    <property type="project" value="MGI"/>
</dbReference>
<dbReference type="GO" id="GO:0070307">
    <property type="term" value="P:lens fiber cell development"/>
    <property type="evidence" value="ECO:0000315"/>
    <property type="project" value="MGI"/>
</dbReference>
<dbReference type="GO" id="GO:0046619">
    <property type="term" value="P:lens placode formation involved in camera-type eye formation"/>
    <property type="evidence" value="ECO:0000315"/>
    <property type="project" value="MGI"/>
</dbReference>
<dbReference type="GO" id="GO:2000726">
    <property type="term" value="P:negative regulation of cardiac muscle cell differentiation"/>
    <property type="evidence" value="ECO:0007669"/>
    <property type="project" value="Ensembl"/>
</dbReference>
<dbReference type="GO" id="GO:0007405">
    <property type="term" value="P:neuroblast proliferation"/>
    <property type="evidence" value="ECO:0000315"/>
    <property type="project" value="MGI"/>
</dbReference>
<dbReference type="GO" id="GO:0001759">
    <property type="term" value="P:organ induction"/>
    <property type="evidence" value="ECO:0000315"/>
    <property type="project" value="MGI"/>
</dbReference>
<dbReference type="GO" id="GO:0043410">
    <property type="term" value="P:positive regulation of MAPK cascade"/>
    <property type="evidence" value="ECO:0000315"/>
    <property type="project" value="MGI"/>
</dbReference>
<dbReference type="GO" id="GO:0060527">
    <property type="term" value="P:prostate epithelial cord arborization involved in prostate glandular acinus morphogenesis"/>
    <property type="evidence" value="ECO:0000315"/>
    <property type="project" value="MGI"/>
</dbReference>
<dbReference type="GO" id="GO:0042981">
    <property type="term" value="P:regulation of apoptotic process"/>
    <property type="evidence" value="ECO:0000315"/>
    <property type="project" value="MGI"/>
</dbReference>
<dbReference type="GO" id="GO:0050678">
    <property type="term" value="P:regulation of epithelial cell proliferation"/>
    <property type="evidence" value="ECO:0000315"/>
    <property type="project" value="MGI"/>
</dbReference>
<dbReference type="GO" id="GO:0070372">
    <property type="term" value="P:regulation of ERK1 and ERK2 cascade"/>
    <property type="evidence" value="ECO:0000315"/>
    <property type="project" value="MGI"/>
</dbReference>
<dbReference type="GO" id="GO:0003281">
    <property type="term" value="P:ventricular septum development"/>
    <property type="evidence" value="ECO:0000315"/>
    <property type="project" value="MGI"/>
</dbReference>
<dbReference type="CDD" id="cd01202">
    <property type="entry name" value="PTB_FRS2"/>
    <property type="match status" value="1"/>
</dbReference>
<dbReference type="FunFam" id="2.30.29.30:FF:000169">
    <property type="entry name" value="Fibroblast growth factor receptor substrate 2"/>
    <property type="match status" value="1"/>
</dbReference>
<dbReference type="Gene3D" id="2.30.29.30">
    <property type="entry name" value="Pleckstrin-homology domain (PH domain)/Phosphotyrosine-binding domain (PTB)"/>
    <property type="match status" value="1"/>
</dbReference>
<dbReference type="InterPro" id="IPR050996">
    <property type="entry name" value="Docking_Protein_DOK"/>
</dbReference>
<dbReference type="InterPro" id="IPR038742">
    <property type="entry name" value="FRS2_PTB"/>
</dbReference>
<dbReference type="InterPro" id="IPR002404">
    <property type="entry name" value="IRS_PTB"/>
</dbReference>
<dbReference type="InterPro" id="IPR011993">
    <property type="entry name" value="PH-like_dom_sf"/>
</dbReference>
<dbReference type="PANTHER" id="PTHR21258">
    <property type="entry name" value="DOCKING PROTEIN RELATED"/>
    <property type="match status" value="1"/>
</dbReference>
<dbReference type="PANTHER" id="PTHR21258:SF40">
    <property type="entry name" value="FIBROBLAST GROWTH FACTOR RECEPTOR SUBSTRATE 2"/>
    <property type="match status" value="1"/>
</dbReference>
<dbReference type="Pfam" id="PF02174">
    <property type="entry name" value="IRS"/>
    <property type="match status" value="1"/>
</dbReference>
<dbReference type="SMART" id="SM01244">
    <property type="entry name" value="IRS"/>
    <property type="match status" value="1"/>
</dbReference>
<dbReference type="SMART" id="SM00310">
    <property type="entry name" value="PTBI"/>
    <property type="match status" value="1"/>
</dbReference>
<dbReference type="SUPFAM" id="SSF50729">
    <property type="entry name" value="PH domain-like"/>
    <property type="match status" value="1"/>
</dbReference>
<dbReference type="PROSITE" id="PS51064">
    <property type="entry name" value="IRS_PTB"/>
    <property type="match status" value="1"/>
</dbReference>
<name>FRS2_MOUSE</name>
<sequence>MGSCCSCPDKDTVPDNHRNKFKVINVDDDGNELGSGVMELTDTELILYTRKRDSVKWHYLCLRRYGYDSNLFSFESGRRCQTGQGIFAFKCARAEELFNMLQEIMQNNSINVVEEPVVERSSHQTELEVPRTPRTPTTPGLGAQNLPNGYPRYPSFGDASSHPSSRHPSVGSARLPSVGEESTHPLLVAEEQVHTYVNTTGVQEERKNRASVHVPPEARVSNAESNTPKEEPSNPEDRDPQVLLKPEGVRFVLGPTPVQKQLMEKEKLEQLGKDPVSGSGAGNTEWDTGYDSDERRDVPPVNKLVYENINGLSIPSASGVRRGRLTSTSTSDTQNINNSAQRRPALLNYENLPSLPPVWEARKLSRDEDDNLGPKTPSLNGYHNNLDPMHNYVNTENVTVPASAHKIDYSKRRDCTPTVFNFDIRRPSLEHRQLNYIQVDLEGGSDSDNPQTPKTPTTPLPQTPTRRTELYAVIDIERTAAMSNLQKALPRDDGTSRKTRHNSTDLPM</sequence>